<dbReference type="EC" id="1.2.1.47" evidence="1"/>
<dbReference type="EC" id="1.2.1.3" evidence="1"/>
<dbReference type="EMBL" id="BC045932">
    <property type="protein sequence ID" value="AAH45932.1"/>
    <property type="molecule type" value="mRNA"/>
</dbReference>
<dbReference type="EMBL" id="BC066668">
    <property type="protein sequence ID" value="AAH66668.1"/>
    <property type="molecule type" value="mRNA"/>
</dbReference>
<dbReference type="RefSeq" id="NP_958879.1">
    <property type="nucleotide sequence ID" value="NM_201471.1"/>
</dbReference>
<dbReference type="RefSeq" id="XP_005166831.1">
    <property type="nucleotide sequence ID" value="XM_005166774.2"/>
</dbReference>
<dbReference type="SMR" id="Q7ZVB2"/>
<dbReference type="FunCoup" id="Q7ZVB2">
    <property type="interactions" value="1138"/>
</dbReference>
<dbReference type="STRING" id="7955.ENSDARP00000091056"/>
<dbReference type="PaxDb" id="7955-ENSDARP00000091056"/>
<dbReference type="Ensembl" id="ENSDART00000100283">
    <property type="protein sequence ID" value="ENSDARP00000091056"/>
    <property type="gene ID" value="ENSDARG00000069100"/>
</dbReference>
<dbReference type="Ensembl" id="ENSDART00000137838">
    <property type="protein sequence ID" value="ENSDARP00000118280"/>
    <property type="gene ID" value="ENSDARG00000069100"/>
</dbReference>
<dbReference type="Ensembl" id="ENSDART00000171771">
    <property type="protein sequence ID" value="ENSDARP00000134258"/>
    <property type="gene ID" value="ENSDARG00000069100"/>
</dbReference>
<dbReference type="Ensembl" id="ENSDART00000182650">
    <property type="protein sequence ID" value="ENSDARP00000152850"/>
    <property type="gene ID" value="ENSDARG00000114905"/>
</dbReference>
<dbReference type="GeneID" id="100005587"/>
<dbReference type="KEGG" id="dre:100005587"/>
<dbReference type="AGR" id="ZFIN:ZDB-GENE-030131-1257"/>
<dbReference type="CTD" id="100005587"/>
<dbReference type="ZFIN" id="ZDB-GENE-030131-1257">
    <property type="gene designation" value="aldh9a1a.1"/>
</dbReference>
<dbReference type="eggNOG" id="KOG2450">
    <property type="taxonomic scope" value="Eukaryota"/>
</dbReference>
<dbReference type="HOGENOM" id="CLU_005391_0_0_1"/>
<dbReference type="InParanoid" id="Q7ZVB2"/>
<dbReference type="OMA" id="WTRMLVH"/>
<dbReference type="OrthoDB" id="310895at2759"/>
<dbReference type="PhylomeDB" id="Q7ZVB2"/>
<dbReference type="TreeFam" id="TF314257"/>
<dbReference type="Reactome" id="R-DRE-71262">
    <property type="pathway name" value="Carnitine synthesis"/>
</dbReference>
<dbReference type="UniPathway" id="UPA00118"/>
<dbReference type="PRO" id="PR:Q7ZVB2"/>
<dbReference type="Proteomes" id="UP000000437">
    <property type="component" value="Alternate scaffold 8"/>
</dbReference>
<dbReference type="Proteomes" id="UP000000437">
    <property type="component" value="Chromosome 8"/>
</dbReference>
<dbReference type="Bgee" id="ENSDARG00000069100">
    <property type="expression patterns" value="Expressed in intestine and 29 other cell types or tissues"/>
</dbReference>
<dbReference type="ExpressionAtlas" id="Q7ZVB2">
    <property type="expression patterns" value="baseline and differential"/>
</dbReference>
<dbReference type="GO" id="GO:0005829">
    <property type="term" value="C:cytosol"/>
    <property type="evidence" value="ECO:0007669"/>
    <property type="project" value="UniProtKB-SubCell"/>
</dbReference>
<dbReference type="GO" id="GO:0047105">
    <property type="term" value="F:4-trimethylammoniobutyraldehyde dehydrogenase activity"/>
    <property type="evidence" value="ECO:0000250"/>
    <property type="project" value="UniProtKB"/>
</dbReference>
<dbReference type="GO" id="GO:0019145">
    <property type="term" value="F:aminobutyraldehyde dehydrogenase (NAD+) activity"/>
    <property type="evidence" value="ECO:0000318"/>
    <property type="project" value="GO_Central"/>
</dbReference>
<dbReference type="GO" id="GO:0006081">
    <property type="term" value="P:aldehyde metabolic process"/>
    <property type="evidence" value="ECO:0000250"/>
    <property type="project" value="UniProtKB"/>
</dbReference>
<dbReference type="GO" id="GO:0045329">
    <property type="term" value="P:carnitine biosynthetic process"/>
    <property type="evidence" value="ECO:0007669"/>
    <property type="project" value="UniProtKB-UniPathway"/>
</dbReference>
<dbReference type="GO" id="GO:0051289">
    <property type="term" value="P:protein homotetramerization"/>
    <property type="evidence" value="ECO:0000250"/>
    <property type="project" value="UniProtKB"/>
</dbReference>
<dbReference type="CDD" id="cd07090">
    <property type="entry name" value="ALDH_F9_TMBADH"/>
    <property type="match status" value="1"/>
</dbReference>
<dbReference type="FunFam" id="3.40.309.10:FF:000019">
    <property type="entry name" value="4-trimethylaminobutyraldehyde dehydrogenase isoform X1"/>
    <property type="match status" value="1"/>
</dbReference>
<dbReference type="FunFam" id="3.40.605.10:FF:000016">
    <property type="entry name" value="4-trimethylaminobutyraldehyde dehydrogenase isoform X1"/>
    <property type="match status" value="1"/>
</dbReference>
<dbReference type="Gene3D" id="3.40.605.10">
    <property type="entry name" value="Aldehyde Dehydrogenase, Chain A, domain 1"/>
    <property type="match status" value="1"/>
</dbReference>
<dbReference type="Gene3D" id="3.40.309.10">
    <property type="entry name" value="Aldehyde Dehydrogenase, Chain A, domain 2"/>
    <property type="match status" value="1"/>
</dbReference>
<dbReference type="InterPro" id="IPR016161">
    <property type="entry name" value="Ald_DH/histidinol_DH"/>
</dbReference>
<dbReference type="InterPro" id="IPR016163">
    <property type="entry name" value="Ald_DH_C"/>
</dbReference>
<dbReference type="InterPro" id="IPR016160">
    <property type="entry name" value="Ald_DH_CS_CYS"/>
</dbReference>
<dbReference type="InterPro" id="IPR029510">
    <property type="entry name" value="Ald_DH_CS_GLU"/>
</dbReference>
<dbReference type="InterPro" id="IPR016162">
    <property type="entry name" value="Ald_DH_N"/>
</dbReference>
<dbReference type="InterPro" id="IPR015590">
    <property type="entry name" value="Aldehyde_DH_dom"/>
</dbReference>
<dbReference type="NCBIfam" id="NF009725">
    <property type="entry name" value="PRK13252.1"/>
    <property type="match status" value="1"/>
</dbReference>
<dbReference type="PANTHER" id="PTHR11699">
    <property type="entry name" value="ALDEHYDE DEHYDROGENASE-RELATED"/>
    <property type="match status" value="1"/>
</dbReference>
<dbReference type="Pfam" id="PF00171">
    <property type="entry name" value="Aldedh"/>
    <property type="match status" value="1"/>
</dbReference>
<dbReference type="SUPFAM" id="SSF53720">
    <property type="entry name" value="ALDH-like"/>
    <property type="match status" value="1"/>
</dbReference>
<dbReference type="PROSITE" id="PS00070">
    <property type="entry name" value="ALDEHYDE_DEHYDR_CYS"/>
    <property type="match status" value="1"/>
</dbReference>
<dbReference type="PROSITE" id="PS00687">
    <property type="entry name" value="ALDEHYDE_DEHYDR_GLU"/>
    <property type="match status" value="1"/>
</dbReference>
<name>A9A1A_DANRE</name>
<protein>
    <recommendedName>
        <fullName>4-trimethylaminobutyraldehyde dehydrogenase A</fullName>
        <shortName>TMABA-DH</shortName>
        <shortName>TMABADH</shortName>
        <ecNumber evidence="1">1.2.1.47</ecNumber>
    </recommendedName>
    <alternativeName>
        <fullName>Aldehyde dehydrogenase family 9 member A1-A</fullName>
        <ecNumber evidence="1">1.2.1.3</ecNumber>
    </alternativeName>
</protein>
<proteinExistence type="evidence at transcript level"/>
<keyword id="KW-0963">Cytoplasm</keyword>
<keyword id="KW-0520">NAD</keyword>
<keyword id="KW-0560">Oxidoreductase</keyword>
<keyword id="KW-1185">Reference proteome</keyword>
<evidence type="ECO:0000250" key="1">
    <source>
        <dbReference type="UniProtKB" id="P49189"/>
    </source>
</evidence>
<evidence type="ECO:0000250" key="2">
    <source>
        <dbReference type="UniProtKB" id="P56533"/>
    </source>
</evidence>
<evidence type="ECO:0000250" key="3">
    <source>
        <dbReference type="UniProtKB" id="Q9JLJ3"/>
    </source>
</evidence>
<evidence type="ECO:0000255" key="4">
    <source>
        <dbReference type="PROSITE-ProRule" id="PRU10007"/>
    </source>
</evidence>
<evidence type="ECO:0000255" key="5">
    <source>
        <dbReference type="PROSITE-ProRule" id="PRU10008"/>
    </source>
</evidence>
<evidence type="ECO:0000305" key="6"/>
<reference key="1">
    <citation type="submission" date="2004-03" db="EMBL/GenBank/DDBJ databases">
        <authorList>
            <consortium name="NIH - Zebrafish Gene Collection (ZGC) project"/>
        </authorList>
    </citation>
    <scope>NUCLEOTIDE SEQUENCE [LARGE SCALE MRNA]</scope>
    <source>
        <tissue>Embryo</tissue>
    </source>
</reference>
<feature type="chain" id="PRO_0000300624" description="4-trimethylaminobutyraldehyde dehydrogenase A">
    <location>
        <begin position="1"/>
        <end position="508"/>
    </location>
</feature>
<feature type="active site" description="Proton acceptor" evidence="4">
    <location>
        <position position="268"/>
    </location>
</feature>
<feature type="active site" description="Nucleophile" evidence="5">
    <location>
        <position position="302"/>
    </location>
</feature>
<feature type="binding site" evidence="2">
    <location>
        <position position="194"/>
    </location>
    <ligand>
        <name>NAD(+)</name>
        <dbReference type="ChEBI" id="CHEBI:57540"/>
    </ligand>
</feature>
<feature type="binding site" evidence="2">
    <location>
        <begin position="246"/>
        <end position="250"/>
    </location>
    <ligand>
        <name>NAD(+)</name>
        <dbReference type="ChEBI" id="CHEBI:57540"/>
    </ligand>
</feature>
<feature type="binding site" evidence="2">
    <location>
        <position position="405"/>
    </location>
    <ligand>
        <name>NAD(+)</name>
        <dbReference type="ChEBI" id="CHEBI:57540"/>
    </ligand>
</feature>
<feature type="sequence conflict" description="In Ref. 1; AAH66668." evidence="6" ref="1">
    <original>G</original>
    <variation>V</variation>
    <location>
        <position position="61"/>
    </location>
</feature>
<sequence>MAQQPLLSLPEFQSVSTGTLVVKEPLNFWGGARVKPRDTKNSEPVYEPATGRVLCDMIPCGEEEVDQAIKSAHSAYLKWSQLSGMERSRIMLEAARIIRERRNAIAKAEVANNGKSITEAEVDIDVAWQCIEYYAGIAPTLSGQHIQLPGGSFAYTRREPLGVCVGIGAWNYPFQIAAWKSAPALACGNAMVFKPSPMTPVTAVMLAEIYKEAGVPDGLFNVVQGGAETGSLLCHHPMVAKVSFTGSVPTGKKVMEMAAKSVKQVTLELGGKSPLIIFKDCELENAIKGALMANFLTQGEVCCNGTRVFVQREIMPKFLEEVVKRTKAISVGDPLCEGTRMGALISKPHMEKVLGFIKQAKEQGGKVLCGGERFVPNDPKLKDGYFVSPCVLDNCRDDMTCVKEEIFGPVMSVLPFDTEEEVLQRANNTTFGLASGVFTRDIARAHRVAANLQAGTCYINNYNVGPVEVPFGGYKMSGFGRENGTVTIEYYSQLKTVVVEMGDVESLF</sequence>
<gene>
    <name type="primary">aldh9a1a</name>
    <name type="synonym">aldh9a1l</name>
</gene>
<organism>
    <name type="scientific">Danio rerio</name>
    <name type="common">Zebrafish</name>
    <name type="synonym">Brachydanio rerio</name>
    <dbReference type="NCBI Taxonomy" id="7955"/>
    <lineage>
        <taxon>Eukaryota</taxon>
        <taxon>Metazoa</taxon>
        <taxon>Chordata</taxon>
        <taxon>Craniata</taxon>
        <taxon>Vertebrata</taxon>
        <taxon>Euteleostomi</taxon>
        <taxon>Actinopterygii</taxon>
        <taxon>Neopterygii</taxon>
        <taxon>Teleostei</taxon>
        <taxon>Ostariophysi</taxon>
        <taxon>Cypriniformes</taxon>
        <taxon>Danionidae</taxon>
        <taxon>Danioninae</taxon>
        <taxon>Danio</taxon>
    </lineage>
</organism>
<comment type="function">
    <text evidence="1">Converts gamma-trimethylaminobutyraldehyde into gamma-butyrobetaine with high efficiency (in vitro). Can catalyze the irreversible oxidation of a broad range of aldehydes to the corresponding acids in an NAD-dependent reaction, but with low efficiency.</text>
</comment>
<comment type="catalytic activity">
    <reaction evidence="1">
        <text>4-(trimethylamino)butanal + NAD(+) + H2O = 4-(trimethylamino)butanoate + NADH + 2 H(+)</text>
        <dbReference type="Rhea" id="RHEA:17985"/>
        <dbReference type="ChEBI" id="CHEBI:15377"/>
        <dbReference type="ChEBI" id="CHEBI:15378"/>
        <dbReference type="ChEBI" id="CHEBI:16244"/>
        <dbReference type="ChEBI" id="CHEBI:18020"/>
        <dbReference type="ChEBI" id="CHEBI:57540"/>
        <dbReference type="ChEBI" id="CHEBI:57945"/>
        <dbReference type="EC" id="1.2.1.47"/>
    </reaction>
</comment>
<comment type="catalytic activity">
    <reaction evidence="1">
        <text>an aldehyde + NAD(+) + H2O = a carboxylate + NADH + 2 H(+)</text>
        <dbReference type="Rhea" id="RHEA:16185"/>
        <dbReference type="ChEBI" id="CHEBI:15377"/>
        <dbReference type="ChEBI" id="CHEBI:15378"/>
        <dbReference type="ChEBI" id="CHEBI:17478"/>
        <dbReference type="ChEBI" id="CHEBI:29067"/>
        <dbReference type="ChEBI" id="CHEBI:57540"/>
        <dbReference type="ChEBI" id="CHEBI:57945"/>
        <dbReference type="EC" id="1.2.1.3"/>
    </reaction>
</comment>
<comment type="pathway">
    <text evidence="1">Amine and polyamine biosynthesis; carnitine biosynthesis.</text>
</comment>
<comment type="subunit">
    <text evidence="1">Homotetramer.</text>
</comment>
<comment type="subcellular location">
    <subcellularLocation>
        <location evidence="3">Cytoplasm</location>
        <location evidence="3">Cytosol</location>
    </subcellularLocation>
</comment>
<comment type="similarity">
    <text evidence="6">Belongs to the aldehyde dehydrogenase family.</text>
</comment>
<accession>Q7ZVB2</accession>
<accession>Q6NYB3</accession>